<organism>
    <name type="scientific">Drosophila melanogaster</name>
    <name type="common">Fruit fly</name>
    <dbReference type="NCBI Taxonomy" id="7227"/>
    <lineage>
        <taxon>Eukaryota</taxon>
        <taxon>Metazoa</taxon>
        <taxon>Ecdysozoa</taxon>
        <taxon>Arthropoda</taxon>
        <taxon>Hexapoda</taxon>
        <taxon>Insecta</taxon>
        <taxon>Pterygota</taxon>
        <taxon>Neoptera</taxon>
        <taxon>Endopterygota</taxon>
        <taxon>Diptera</taxon>
        <taxon>Brachycera</taxon>
        <taxon>Muscomorpha</taxon>
        <taxon>Ephydroidea</taxon>
        <taxon>Drosophilidae</taxon>
        <taxon>Drosophila</taxon>
        <taxon>Sophophora</taxon>
    </lineage>
</organism>
<dbReference type="EMBL" id="AE014134">
    <property type="protein sequence ID" value="AAF53868.1"/>
    <property type="molecule type" value="Genomic_DNA"/>
</dbReference>
<dbReference type="EMBL" id="AY060895">
    <property type="protein sequence ID" value="AAL28443.1"/>
    <property type="molecule type" value="mRNA"/>
</dbReference>
<dbReference type="EMBL" id="AY094647">
    <property type="protein sequence ID" value="AAM11000.1"/>
    <property type="molecule type" value="mRNA"/>
</dbReference>
<dbReference type="RefSeq" id="NP_610019.2">
    <property type="nucleotide sequence ID" value="NM_136175.5"/>
</dbReference>
<dbReference type="SMR" id="Q9VIP8"/>
<dbReference type="BioGRID" id="61260">
    <property type="interactions" value="5"/>
</dbReference>
<dbReference type="FunCoup" id="Q9VIP8">
    <property type="interactions" value="378"/>
</dbReference>
<dbReference type="IntAct" id="Q9VIP8">
    <property type="interactions" value="3"/>
</dbReference>
<dbReference type="STRING" id="7227.FBpp0080879"/>
<dbReference type="PaxDb" id="7227-FBpp0080879"/>
<dbReference type="DNASU" id="35289"/>
<dbReference type="EnsemblMetazoa" id="FBtr0081347">
    <property type="protein sequence ID" value="FBpp0080879"/>
    <property type="gene ID" value="FBgn0003978"/>
</dbReference>
<dbReference type="GeneID" id="35289"/>
<dbReference type="KEGG" id="dme:Dmel_CG10728"/>
<dbReference type="UCSC" id="CG10728-RA">
    <property type="organism name" value="d. melanogaster"/>
</dbReference>
<dbReference type="AGR" id="FB:FBgn0003978"/>
<dbReference type="CTD" id="35289"/>
<dbReference type="FlyBase" id="FBgn0003978">
    <property type="gene designation" value="vls"/>
</dbReference>
<dbReference type="VEuPathDB" id="VectorBase:FBgn0003978"/>
<dbReference type="eggNOG" id="KOG0284">
    <property type="taxonomic scope" value="Eukaryota"/>
</dbReference>
<dbReference type="HOGENOM" id="CLU_064378_0_0_1"/>
<dbReference type="InParanoid" id="Q9VIP8"/>
<dbReference type="OMA" id="GGCARLW"/>
<dbReference type="OrthoDB" id="10260946at2759"/>
<dbReference type="PhylomeDB" id="Q9VIP8"/>
<dbReference type="Reactome" id="R-DME-3214858">
    <property type="pathway name" value="RMTs methylate histone arginines"/>
</dbReference>
<dbReference type="Reactome" id="R-DME-9037629">
    <property type="pathway name" value="Lewis blood group biosynthesis"/>
</dbReference>
<dbReference type="SignaLink" id="Q9VIP8"/>
<dbReference type="BioGRID-ORCS" id="35289">
    <property type="hits" value="0 hits in 1 CRISPR screen"/>
</dbReference>
<dbReference type="GenomeRNAi" id="35289"/>
<dbReference type="PRO" id="PR:Q9VIP8"/>
<dbReference type="Proteomes" id="UP000000803">
    <property type="component" value="Chromosome 2L"/>
</dbReference>
<dbReference type="Bgee" id="FBgn0003978">
    <property type="expression patterns" value="Expressed in wing disc and 81 other cell types or tissues"/>
</dbReference>
<dbReference type="ExpressionAtlas" id="Q9VIP8">
    <property type="expression patterns" value="baseline and differential"/>
</dbReference>
<dbReference type="GO" id="GO:0005737">
    <property type="term" value="C:cytoplasm"/>
    <property type="evidence" value="ECO:0000314"/>
    <property type="project" value="UniProtKB"/>
</dbReference>
<dbReference type="GO" id="GO:0034709">
    <property type="term" value="C:methylosome"/>
    <property type="evidence" value="ECO:0000318"/>
    <property type="project" value="GO_Central"/>
</dbReference>
<dbReference type="GO" id="GO:0043186">
    <property type="term" value="C:P granule"/>
    <property type="evidence" value="ECO:0000314"/>
    <property type="project" value="FlyBase"/>
</dbReference>
<dbReference type="GO" id="GO:0045495">
    <property type="term" value="C:pole plasm"/>
    <property type="evidence" value="ECO:0000314"/>
    <property type="project" value="FlyBase"/>
</dbReference>
<dbReference type="GO" id="GO:0007349">
    <property type="term" value="P:cellularization"/>
    <property type="evidence" value="ECO:0007001"/>
    <property type="project" value="FlyBase"/>
</dbReference>
<dbReference type="GO" id="GO:0009880">
    <property type="term" value="P:embryonic pattern specification"/>
    <property type="evidence" value="ECO:0000315"/>
    <property type="project" value="UniProtKB"/>
</dbReference>
<dbReference type="GO" id="GO:0007309">
    <property type="term" value="P:oocyte axis specification"/>
    <property type="evidence" value="ECO:0000318"/>
    <property type="project" value="GO_Central"/>
</dbReference>
<dbReference type="GO" id="GO:0007315">
    <property type="term" value="P:pole plasm assembly"/>
    <property type="evidence" value="ECO:0000315"/>
    <property type="project" value="UniProtKB"/>
</dbReference>
<dbReference type="Gene3D" id="2.130.10.10">
    <property type="entry name" value="YVTN repeat-like/Quinoprotein amine dehydrogenase"/>
    <property type="match status" value="1"/>
</dbReference>
<dbReference type="InterPro" id="IPR052139">
    <property type="entry name" value="Methylosome_Comp_WDR77"/>
</dbReference>
<dbReference type="InterPro" id="IPR015943">
    <property type="entry name" value="WD40/YVTN_repeat-like_dom_sf"/>
</dbReference>
<dbReference type="InterPro" id="IPR019775">
    <property type="entry name" value="WD40_repeat_CS"/>
</dbReference>
<dbReference type="InterPro" id="IPR036322">
    <property type="entry name" value="WD40_repeat_dom_sf"/>
</dbReference>
<dbReference type="InterPro" id="IPR001680">
    <property type="entry name" value="WD40_rpt"/>
</dbReference>
<dbReference type="PANTHER" id="PTHR46853">
    <property type="entry name" value="METHYLOSOME PROTEIN 50"/>
    <property type="match status" value="1"/>
</dbReference>
<dbReference type="PANTHER" id="PTHR46853:SF1">
    <property type="entry name" value="METHYLOSOME PROTEIN 50"/>
    <property type="match status" value="1"/>
</dbReference>
<dbReference type="Pfam" id="PF00400">
    <property type="entry name" value="WD40"/>
    <property type="match status" value="1"/>
</dbReference>
<dbReference type="SMART" id="SM00320">
    <property type="entry name" value="WD40"/>
    <property type="match status" value="2"/>
</dbReference>
<dbReference type="SUPFAM" id="SSF50978">
    <property type="entry name" value="WD40 repeat-like"/>
    <property type="match status" value="1"/>
</dbReference>
<dbReference type="PROSITE" id="PS00678">
    <property type="entry name" value="WD_REPEATS_1"/>
    <property type="match status" value="1"/>
</dbReference>
<dbReference type="PROSITE" id="PS50082">
    <property type="entry name" value="WD_REPEATS_2"/>
    <property type="match status" value="1"/>
</dbReference>
<dbReference type="PROSITE" id="PS50294">
    <property type="entry name" value="WD_REPEATS_REGION"/>
    <property type="match status" value="1"/>
</dbReference>
<proteinExistence type="evidence at protein level"/>
<keyword id="KW-0963">Cytoplasm</keyword>
<keyword id="KW-0217">Developmental protein</keyword>
<keyword id="KW-0221">Differentiation</keyword>
<keyword id="KW-0896">Oogenesis</keyword>
<keyword id="KW-1185">Reference proteome</keyword>
<keyword id="KW-0677">Repeat</keyword>
<keyword id="KW-0853">WD repeat</keyword>
<name>VLS_DROME</name>
<comment type="function">
    <text evidence="1 2">Involved in specific localization of cytoplasmic proteins during the formation of pole plasm. Required for synthesis and/or stability of oskar protein (osk) and localization of tudor (tud) in both the nuage and posterior pole of the oocyte. Required for normal posterior localization of osk in later stages of oogenesis and for posterior localization of the vasa (vas) protein during the entire process of pole plasm assembly. May act by regulating the complex that contains the arginine N-methyltransferase csul.</text>
</comment>
<comment type="subunit">
    <text evidence="2">Interacts with csul and tud.</text>
</comment>
<comment type="subcellular location">
    <subcellularLocation>
        <location evidence="1 2">Cytoplasm</location>
    </subcellularLocation>
</comment>
<comment type="tissue specificity">
    <text evidence="1 2">In oocytes, localizes to pole plasm and nuage (at protein level). Expressed stronger in the germline than in somatic cells. In the germarium it sometimes concentrates in perinuclear aggregates that disappear by stage 2 of oogenesis. At later stages, it is uniformly distributed in the nurse cells and oocyte, as well as in young embryos, with no particular enrichment at the posterior or inside the pole cells (at protein level).</text>
</comment>
<comment type="developmental stage">
    <text evidence="1 2">Expressed both maternally and zygotically. Abundant in ovaries, early embryos and adult females, but reduced in adult males.</text>
</comment>
<protein>
    <recommendedName>
        <fullName>Protein valois</fullName>
    </recommendedName>
    <alternativeName>
        <fullName>MEP50 homolog</fullName>
    </alternativeName>
</protein>
<sequence>MFPQRSSELYRTPVTHQPPPALELAGNLEYPNLNIADLNARLENLSPRLHDCWDSIAINDHNHLALATNRREGRQWWGMLFGYGRDQMHHMSVDSANFKLQAEHTVNIVRYAEDDFLLVALGDTRLQAWSTYSKVRDSQSPYCLFLVGESSAHPTPISQLSVFKADPRTAVSGSADSTLNVWDLSGADMVSTYRSRSSHTDKLTGLATPAASVDKFVTCDRGGCARLWDVRAAAPSSTCLYADASHVLSFTSAAWAAASELQGDNHIYLGDYDGKVHTLDIRVPRKLAETREYFDKGHVAQLLINGPHLAAMSNLPASVKVANVQAGHEFIYTHQDTHSRLTDAVWTDDSTLITIGHGRKMVTHAIK</sequence>
<accession>Q9VIP8</accession>
<accession>Q95SA0</accession>
<evidence type="ECO:0000269" key="1">
    <source>
    </source>
</evidence>
<evidence type="ECO:0000269" key="2">
    <source>
    </source>
</evidence>
<evidence type="ECO:0000305" key="3"/>
<feature type="chain" id="PRO_0000051332" description="Protein valois">
    <location>
        <begin position="1"/>
        <end position="367"/>
    </location>
</feature>
<feature type="repeat" description="WD 1">
    <location>
        <begin position="101"/>
        <end position="139"/>
    </location>
</feature>
<feature type="repeat" description="WD 2">
    <location>
        <begin position="152"/>
        <end position="192"/>
    </location>
</feature>
<feature type="repeat" description="WD 3">
    <location>
        <begin position="198"/>
        <end position="238"/>
    </location>
</feature>
<feature type="region of interest" description="Interaction with csul">
    <location>
        <begin position="309"/>
        <end position="367"/>
    </location>
</feature>
<feature type="sequence conflict" description="In Ref. 3; AAL28443/AAM11000." evidence="3" ref="3">
    <original>L</original>
    <variation>I</variation>
    <location>
        <position position="179"/>
    </location>
</feature>
<gene>
    <name type="primary">vls</name>
    <name type="synonym">vsl</name>
    <name type="ORF">CG10728</name>
</gene>
<reference key="1">
    <citation type="journal article" date="2000" name="Science">
        <title>The genome sequence of Drosophila melanogaster.</title>
        <authorList>
            <person name="Adams M.D."/>
            <person name="Celniker S.E."/>
            <person name="Holt R.A."/>
            <person name="Evans C.A."/>
            <person name="Gocayne J.D."/>
            <person name="Amanatides P.G."/>
            <person name="Scherer S.E."/>
            <person name="Li P.W."/>
            <person name="Hoskins R.A."/>
            <person name="Galle R.F."/>
            <person name="George R.A."/>
            <person name="Lewis S.E."/>
            <person name="Richards S."/>
            <person name="Ashburner M."/>
            <person name="Henderson S.N."/>
            <person name="Sutton G.G."/>
            <person name="Wortman J.R."/>
            <person name="Yandell M.D."/>
            <person name="Zhang Q."/>
            <person name="Chen L.X."/>
            <person name="Brandon R.C."/>
            <person name="Rogers Y.-H.C."/>
            <person name="Blazej R.G."/>
            <person name="Champe M."/>
            <person name="Pfeiffer B.D."/>
            <person name="Wan K.H."/>
            <person name="Doyle C."/>
            <person name="Baxter E.G."/>
            <person name="Helt G."/>
            <person name="Nelson C.R."/>
            <person name="Miklos G.L.G."/>
            <person name="Abril J.F."/>
            <person name="Agbayani A."/>
            <person name="An H.-J."/>
            <person name="Andrews-Pfannkoch C."/>
            <person name="Baldwin D."/>
            <person name="Ballew R.M."/>
            <person name="Basu A."/>
            <person name="Baxendale J."/>
            <person name="Bayraktaroglu L."/>
            <person name="Beasley E.M."/>
            <person name="Beeson K.Y."/>
            <person name="Benos P.V."/>
            <person name="Berman B.P."/>
            <person name="Bhandari D."/>
            <person name="Bolshakov S."/>
            <person name="Borkova D."/>
            <person name="Botchan M.R."/>
            <person name="Bouck J."/>
            <person name="Brokstein P."/>
            <person name="Brottier P."/>
            <person name="Burtis K.C."/>
            <person name="Busam D.A."/>
            <person name="Butler H."/>
            <person name="Cadieu E."/>
            <person name="Center A."/>
            <person name="Chandra I."/>
            <person name="Cherry J.M."/>
            <person name="Cawley S."/>
            <person name="Dahlke C."/>
            <person name="Davenport L.B."/>
            <person name="Davies P."/>
            <person name="de Pablos B."/>
            <person name="Delcher A."/>
            <person name="Deng Z."/>
            <person name="Mays A.D."/>
            <person name="Dew I."/>
            <person name="Dietz S.M."/>
            <person name="Dodson K."/>
            <person name="Doup L.E."/>
            <person name="Downes M."/>
            <person name="Dugan-Rocha S."/>
            <person name="Dunkov B.C."/>
            <person name="Dunn P."/>
            <person name="Durbin K.J."/>
            <person name="Evangelista C.C."/>
            <person name="Ferraz C."/>
            <person name="Ferriera S."/>
            <person name="Fleischmann W."/>
            <person name="Fosler C."/>
            <person name="Gabrielian A.E."/>
            <person name="Garg N.S."/>
            <person name="Gelbart W.M."/>
            <person name="Glasser K."/>
            <person name="Glodek A."/>
            <person name="Gong F."/>
            <person name="Gorrell J.H."/>
            <person name="Gu Z."/>
            <person name="Guan P."/>
            <person name="Harris M."/>
            <person name="Harris N.L."/>
            <person name="Harvey D.A."/>
            <person name="Heiman T.J."/>
            <person name="Hernandez J.R."/>
            <person name="Houck J."/>
            <person name="Hostin D."/>
            <person name="Houston K.A."/>
            <person name="Howland T.J."/>
            <person name="Wei M.-H."/>
            <person name="Ibegwam C."/>
            <person name="Jalali M."/>
            <person name="Kalush F."/>
            <person name="Karpen G.H."/>
            <person name="Ke Z."/>
            <person name="Kennison J.A."/>
            <person name="Ketchum K.A."/>
            <person name="Kimmel B.E."/>
            <person name="Kodira C.D."/>
            <person name="Kraft C.L."/>
            <person name="Kravitz S."/>
            <person name="Kulp D."/>
            <person name="Lai Z."/>
            <person name="Lasko P."/>
            <person name="Lei Y."/>
            <person name="Levitsky A.A."/>
            <person name="Li J.H."/>
            <person name="Li Z."/>
            <person name="Liang Y."/>
            <person name="Lin X."/>
            <person name="Liu X."/>
            <person name="Mattei B."/>
            <person name="McIntosh T.C."/>
            <person name="McLeod M.P."/>
            <person name="McPherson D."/>
            <person name="Merkulov G."/>
            <person name="Milshina N.V."/>
            <person name="Mobarry C."/>
            <person name="Morris J."/>
            <person name="Moshrefi A."/>
            <person name="Mount S.M."/>
            <person name="Moy M."/>
            <person name="Murphy B."/>
            <person name="Murphy L."/>
            <person name="Muzny D.M."/>
            <person name="Nelson D.L."/>
            <person name="Nelson D.R."/>
            <person name="Nelson K.A."/>
            <person name="Nixon K."/>
            <person name="Nusskern D.R."/>
            <person name="Pacleb J.M."/>
            <person name="Palazzolo M."/>
            <person name="Pittman G.S."/>
            <person name="Pan S."/>
            <person name="Pollard J."/>
            <person name="Puri V."/>
            <person name="Reese M.G."/>
            <person name="Reinert K."/>
            <person name="Remington K."/>
            <person name="Saunders R.D.C."/>
            <person name="Scheeler F."/>
            <person name="Shen H."/>
            <person name="Shue B.C."/>
            <person name="Siden-Kiamos I."/>
            <person name="Simpson M."/>
            <person name="Skupski M.P."/>
            <person name="Smith T.J."/>
            <person name="Spier E."/>
            <person name="Spradling A.C."/>
            <person name="Stapleton M."/>
            <person name="Strong R."/>
            <person name="Sun E."/>
            <person name="Svirskas R."/>
            <person name="Tector C."/>
            <person name="Turner R."/>
            <person name="Venter E."/>
            <person name="Wang A.H."/>
            <person name="Wang X."/>
            <person name="Wang Z.-Y."/>
            <person name="Wassarman D.A."/>
            <person name="Weinstock G.M."/>
            <person name="Weissenbach J."/>
            <person name="Williams S.M."/>
            <person name="Woodage T."/>
            <person name="Worley K.C."/>
            <person name="Wu D."/>
            <person name="Yang S."/>
            <person name="Yao Q.A."/>
            <person name="Ye J."/>
            <person name="Yeh R.-F."/>
            <person name="Zaveri J.S."/>
            <person name="Zhan M."/>
            <person name="Zhang G."/>
            <person name="Zhao Q."/>
            <person name="Zheng L."/>
            <person name="Zheng X.H."/>
            <person name="Zhong F.N."/>
            <person name="Zhong W."/>
            <person name="Zhou X."/>
            <person name="Zhu S.C."/>
            <person name="Zhu X."/>
            <person name="Smith H.O."/>
            <person name="Gibbs R.A."/>
            <person name="Myers E.W."/>
            <person name="Rubin G.M."/>
            <person name="Venter J.C."/>
        </authorList>
    </citation>
    <scope>NUCLEOTIDE SEQUENCE [LARGE SCALE GENOMIC DNA]</scope>
    <source>
        <strain>Berkeley</strain>
    </source>
</reference>
<reference key="2">
    <citation type="journal article" date="2002" name="Genome Biol.">
        <title>Annotation of the Drosophila melanogaster euchromatic genome: a systematic review.</title>
        <authorList>
            <person name="Misra S."/>
            <person name="Crosby M.A."/>
            <person name="Mungall C.J."/>
            <person name="Matthews B.B."/>
            <person name="Campbell K.S."/>
            <person name="Hradecky P."/>
            <person name="Huang Y."/>
            <person name="Kaminker J.S."/>
            <person name="Millburn G.H."/>
            <person name="Prochnik S.E."/>
            <person name="Smith C.D."/>
            <person name="Tupy J.L."/>
            <person name="Whitfield E.J."/>
            <person name="Bayraktaroglu L."/>
            <person name="Berman B.P."/>
            <person name="Bettencourt B.R."/>
            <person name="Celniker S.E."/>
            <person name="de Grey A.D.N.J."/>
            <person name="Drysdale R.A."/>
            <person name="Harris N.L."/>
            <person name="Richter J."/>
            <person name="Russo S."/>
            <person name="Schroeder A.J."/>
            <person name="Shu S.Q."/>
            <person name="Stapleton M."/>
            <person name="Yamada C."/>
            <person name="Ashburner M."/>
            <person name="Gelbart W.M."/>
            <person name="Rubin G.M."/>
            <person name="Lewis S.E."/>
        </authorList>
    </citation>
    <scope>GENOME REANNOTATION</scope>
    <source>
        <strain>Berkeley</strain>
    </source>
</reference>
<reference key="3">
    <citation type="journal article" date="2002" name="Genome Biol.">
        <title>A Drosophila full-length cDNA resource.</title>
        <authorList>
            <person name="Stapleton M."/>
            <person name="Carlson J.W."/>
            <person name="Brokstein P."/>
            <person name="Yu C."/>
            <person name="Champe M."/>
            <person name="George R.A."/>
            <person name="Guarin H."/>
            <person name="Kronmiller B."/>
            <person name="Pacleb J.M."/>
            <person name="Park S."/>
            <person name="Wan K.H."/>
            <person name="Rubin G.M."/>
            <person name="Celniker S.E."/>
        </authorList>
    </citation>
    <scope>NUCLEOTIDE SEQUENCE [LARGE SCALE MRNA]</scope>
    <source>
        <strain>Berkeley</strain>
        <tissue>Ovary</tissue>
        <tissue>Testis</tissue>
    </source>
</reference>
<reference key="4">
    <citation type="journal article" date="2005" name="Development">
        <title>Drosophila valois encodes a divergent WD protein that is required for Vasa localization and Oskar protein accumulation.</title>
        <authorList>
            <person name="Cavey M."/>
            <person name="Hijal S."/>
            <person name="Zhang X."/>
            <person name="Suter B."/>
        </authorList>
    </citation>
    <scope>FUNCTION</scope>
    <scope>SUBCELLULAR LOCATION</scope>
    <scope>TISSUE SPECIFICITY</scope>
    <scope>DEVELOPMENTAL STAGE</scope>
</reference>
<reference key="5">
    <citation type="journal article" date="2005" name="Development">
        <title>Valois, a component of the nuage and pole plasm, is involved in assembly of these structures, and binds to Tudor and the methyltransferase Capsuleen.</title>
        <authorList>
            <person name="Anne J."/>
            <person name="Mechler B.M."/>
        </authorList>
    </citation>
    <scope>FUNCTION</scope>
    <scope>SUBCELLULAR LOCATION</scope>
    <scope>TISSUE SPECIFICITY</scope>
    <scope>DEVELOPMENTAL STAGE</scope>
    <scope>INTERACTION WITH CSUL AND TUD</scope>
</reference>